<accession>B8AY75</accession>
<accession>Q8W129</accession>
<reference key="1">
    <citation type="journal article" date="2004" name="J. Exp. Bot.">
        <title>Differential expression of three genes encoding an ethylene receptor in rice during development, and in response to indole-3-acetic acid and silver ions.</title>
        <authorList>
            <person name="Yau C.P."/>
            <person name="Wang L."/>
            <person name="Yu M."/>
            <person name="Zee S.Y."/>
            <person name="Yip W.K."/>
        </authorList>
    </citation>
    <scope>NUCLEOTIDE SEQUENCE [MRNA]</scope>
    <scope>TISSUE SPECIFICITY</scope>
    <source>
        <strain>cv. IR36</strain>
    </source>
</reference>
<reference key="2">
    <citation type="journal article" date="2005" name="PLoS Biol.">
        <title>The genomes of Oryza sativa: a history of duplications.</title>
        <authorList>
            <person name="Yu J."/>
            <person name="Wang J."/>
            <person name="Lin W."/>
            <person name="Li S."/>
            <person name="Li H."/>
            <person name="Zhou J."/>
            <person name="Ni P."/>
            <person name="Dong W."/>
            <person name="Hu S."/>
            <person name="Zeng C."/>
            <person name="Zhang J."/>
            <person name="Zhang Y."/>
            <person name="Li R."/>
            <person name="Xu Z."/>
            <person name="Li S."/>
            <person name="Li X."/>
            <person name="Zheng H."/>
            <person name="Cong L."/>
            <person name="Lin L."/>
            <person name="Yin J."/>
            <person name="Geng J."/>
            <person name="Li G."/>
            <person name="Shi J."/>
            <person name="Liu J."/>
            <person name="Lv H."/>
            <person name="Li J."/>
            <person name="Wang J."/>
            <person name="Deng Y."/>
            <person name="Ran L."/>
            <person name="Shi X."/>
            <person name="Wang X."/>
            <person name="Wu Q."/>
            <person name="Li C."/>
            <person name="Ren X."/>
            <person name="Wang J."/>
            <person name="Wang X."/>
            <person name="Li D."/>
            <person name="Liu D."/>
            <person name="Zhang X."/>
            <person name="Ji Z."/>
            <person name="Zhao W."/>
            <person name="Sun Y."/>
            <person name="Zhang Z."/>
            <person name="Bao J."/>
            <person name="Han Y."/>
            <person name="Dong L."/>
            <person name="Ji J."/>
            <person name="Chen P."/>
            <person name="Wu S."/>
            <person name="Liu J."/>
            <person name="Xiao Y."/>
            <person name="Bu D."/>
            <person name="Tan J."/>
            <person name="Yang L."/>
            <person name="Ye C."/>
            <person name="Zhang J."/>
            <person name="Xu J."/>
            <person name="Zhou Y."/>
            <person name="Yu Y."/>
            <person name="Zhang B."/>
            <person name="Zhuang S."/>
            <person name="Wei H."/>
            <person name="Liu B."/>
            <person name="Lei M."/>
            <person name="Yu H."/>
            <person name="Li Y."/>
            <person name="Xu H."/>
            <person name="Wei S."/>
            <person name="He X."/>
            <person name="Fang L."/>
            <person name="Zhang Z."/>
            <person name="Zhang Y."/>
            <person name="Huang X."/>
            <person name="Su Z."/>
            <person name="Tong W."/>
            <person name="Li J."/>
            <person name="Tong Z."/>
            <person name="Li S."/>
            <person name="Ye J."/>
            <person name="Wang L."/>
            <person name="Fang L."/>
            <person name="Lei T."/>
            <person name="Chen C.-S."/>
            <person name="Chen H.-C."/>
            <person name="Xu Z."/>
            <person name="Li H."/>
            <person name="Huang H."/>
            <person name="Zhang F."/>
            <person name="Xu H."/>
            <person name="Li N."/>
            <person name="Zhao C."/>
            <person name="Li S."/>
            <person name="Dong L."/>
            <person name="Huang Y."/>
            <person name="Li L."/>
            <person name="Xi Y."/>
            <person name="Qi Q."/>
            <person name="Li W."/>
            <person name="Zhang B."/>
            <person name="Hu W."/>
            <person name="Zhang Y."/>
            <person name="Tian X."/>
            <person name="Jiao Y."/>
            <person name="Liang X."/>
            <person name="Jin J."/>
            <person name="Gao L."/>
            <person name="Zheng W."/>
            <person name="Hao B."/>
            <person name="Liu S.-M."/>
            <person name="Wang W."/>
            <person name="Yuan L."/>
            <person name="Cao M."/>
            <person name="McDermott J."/>
            <person name="Samudrala R."/>
            <person name="Wang J."/>
            <person name="Wong G.K.-S."/>
            <person name="Yang H."/>
        </authorList>
    </citation>
    <scope>NUCLEOTIDE SEQUENCE [LARGE SCALE GENOMIC DNA]</scope>
    <source>
        <strain>cv. 93-11</strain>
    </source>
</reference>
<keyword id="KW-0067">ATP-binding</keyword>
<keyword id="KW-0186">Copper</keyword>
<keyword id="KW-1015">Disulfide bond</keyword>
<keyword id="KW-0256">Endoplasmic reticulum</keyword>
<keyword id="KW-0936">Ethylene signaling pathway</keyword>
<keyword id="KW-0418">Kinase</keyword>
<keyword id="KW-0472">Membrane</keyword>
<keyword id="KW-0479">Metal-binding</keyword>
<keyword id="KW-0547">Nucleotide-binding</keyword>
<keyword id="KW-0597">Phosphoprotein</keyword>
<keyword id="KW-0675">Receptor</keyword>
<keyword id="KW-1185">Reference proteome</keyword>
<keyword id="KW-0808">Transferase</keyword>
<keyword id="KW-0812">Transmembrane</keyword>
<keyword id="KW-1133">Transmembrane helix</keyword>
<keyword id="KW-0902">Two-component regulatory system</keyword>
<protein>
    <recommendedName>
        <fullName evidence="7">Probable ethylene response sensor 2</fullName>
        <shortName evidence="6">OS-ERS2</shortName>
        <ecNumber evidence="7">2.7.13.3</ecNumber>
    </recommendedName>
    <alternativeName>
        <fullName evidence="6">Ethylene response factor 2</fullName>
    </alternativeName>
</protein>
<dbReference type="EC" id="2.7.13.3" evidence="7"/>
<dbReference type="EMBL" id="AF460181">
    <property type="protein sequence ID" value="AAL66363.1"/>
    <property type="molecule type" value="mRNA"/>
</dbReference>
<dbReference type="EMBL" id="CM000130">
    <property type="protein sequence ID" value="EEC78552.1"/>
    <property type="molecule type" value="Genomic_DNA"/>
</dbReference>
<dbReference type="SMR" id="B8AY75"/>
<dbReference type="STRING" id="39946.B8AY75"/>
<dbReference type="EnsemblPlants" id="BGIOSGA018780-TA">
    <property type="protein sequence ID" value="BGIOSGA018780-PA"/>
    <property type="gene ID" value="BGIOSGA018780"/>
</dbReference>
<dbReference type="EnsemblPlants" id="OsGoSa_05g0004010.01">
    <property type="protein sequence ID" value="OsGoSa_05g0004010.01"/>
    <property type="gene ID" value="OsGoSa_05g0004010"/>
</dbReference>
<dbReference type="EnsemblPlants" id="OsIR64_05g0003860.01">
    <property type="protein sequence ID" value="OsIR64_05g0003860.01"/>
    <property type="gene ID" value="OsIR64_05g0003860"/>
</dbReference>
<dbReference type="EnsemblPlants" id="OsLaMu_05g0004080.01">
    <property type="protein sequence ID" value="OsLaMu_05g0004080.01"/>
    <property type="gene ID" value="OsLaMu_05g0004080"/>
</dbReference>
<dbReference type="EnsemblPlants" id="OsLiXu_05g0004030.01">
    <property type="protein sequence ID" value="OsLiXu_05g0004030.01"/>
    <property type="gene ID" value="OsLiXu_05g0004030"/>
</dbReference>
<dbReference type="EnsemblPlants" id="OsPr106_05g0004080.01">
    <property type="protein sequence ID" value="OsPr106_05g0004080.01"/>
    <property type="gene ID" value="OsPr106_05g0004080"/>
</dbReference>
<dbReference type="EnsemblPlants" id="OsZS97_05G004050_01">
    <property type="protein sequence ID" value="OsZS97_05G004050_01"/>
    <property type="gene ID" value="OsZS97_05G004050"/>
</dbReference>
<dbReference type="Gramene" id="BGIOSGA018780-TA">
    <property type="protein sequence ID" value="BGIOSGA018780-PA"/>
    <property type="gene ID" value="BGIOSGA018780"/>
</dbReference>
<dbReference type="Gramene" id="OsGoSa_05g0004010.01">
    <property type="protein sequence ID" value="OsGoSa_05g0004010.01"/>
    <property type="gene ID" value="OsGoSa_05g0004010"/>
</dbReference>
<dbReference type="Gramene" id="OsIR64_05g0003860.01">
    <property type="protein sequence ID" value="OsIR64_05g0003860.01"/>
    <property type="gene ID" value="OsIR64_05g0003860"/>
</dbReference>
<dbReference type="Gramene" id="OsLaMu_05g0004080.01">
    <property type="protein sequence ID" value="OsLaMu_05g0004080.01"/>
    <property type="gene ID" value="OsLaMu_05g0004080"/>
</dbReference>
<dbReference type="Gramene" id="OsLiXu_05g0004030.01">
    <property type="protein sequence ID" value="OsLiXu_05g0004030.01"/>
    <property type="gene ID" value="OsLiXu_05g0004030"/>
</dbReference>
<dbReference type="Gramene" id="OsPr106_05g0004080.01">
    <property type="protein sequence ID" value="OsPr106_05g0004080.01"/>
    <property type="gene ID" value="OsPr106_05g0004080"/>
</dbReference>
<dbReference type="Gramene" id="OsZS97_05G004050_01">
    <property type="protein sequence ID" value="OsZS97_05G004050_01"/>
    <property type="gene ID" value="OsZS97_05G004050"/>
</dbReference>
<dbReference type="HOGENOM" id="CLU_000445_114_48_1"/>
<dbReference type="OMA" id="ISARCPW"/>
<dbReference type="OrthoDB" id="60033at2759"/>
<dbReference type="Proteomes" id="UP000007015">
    <property type="component" value="Chromosome 5"/>
</dbReference>
<dbReference type="GO" id="GO:0005789">
    <property type="term" value="C:endoplasmic reticulum membrane"/>
    <property type="evidence" value="ECO:0007669"/>
    <property type="project" value="UniProtKB-SubCell"/>
</dbReference>
<dbReference type="GO" id="GO:0005524">
    <property type="term" value="F:ATP binding"/>
    <property type="evidence" value="ECO:0007669"/>
    <property type="project" value="UniProtKB-KW"/>
</dbReference>
<dbReference type="GO" id="GO:0051740">
    <property type="term" value="F:ethylene binding"/>
    <property type="evidence" value="ECO:0007669"/>
    <property type="project" value="TreeGrafter"/>
</dbReference>
<dbReference type="GO" id="GO:0038199">
    <property type="term" value="F:ethylene receptor activity"/>
    <property type="evidence" value="ECO:0007669"/>
    <property type="project" value="TreeGrafter"/>
</dbReference>
<dbReference type="GO" id="GO:0046872">
    <property type="term" value="F:metal ion binding"/>
    <property type="evidence" value="ECO:0007669"/>
    <property type="project" value="UniProtKB-KW"/>
</dbReference>
<dbReference type="GO" id="GO:0000155">
    <property type="term" value="F:phosphorelay sensor kinase activity"/>
    <property type="evidence" value="ECO:0007669"/>
    <property type="project" value="InterPro"/>
</dbReference>
<dbReference type="GO" id="GO:0010105">
    <property type="term" value="P:negative regulation of ethylene-activated signaling pathway"/>
    <property type="evidence" value="ECO:0007669"/>
    <property type="project" value="UniProtKB-ARBA"/>
</dbReference>
<dbReference type="CDD" id="cd00082">
    <property type="entry name" value="HisKA"/>
    <property type="match status" value="1"/>
</dbReference>
<dbReference type="FunFam" id="1.10.287.130:FF:000004">
    <property type="entry name" value="Ethylene receptor 1"/>
    <property type="match status" value="1"/>
</dbReference>
<dbReference type="FunFam" id="3.30.565.10:FF:000030">
    <property type="entry name" value="Ethylene receptor 1"/>
    <property type="match status" value="1"/>
</dbReference>
<dbReference type="FunFam" id="3.30.450.40:FF:000026">
    <property type="entry name" value="Ethylene response sensor"/>
    <property type="match status" value="1"/>
</dbReference>
<dbReference type="Gene3D" id="1.10.287.130">
    <property type="match status" value="1"/>
</dbReference>
<dbReference type="Gene3D" id="3.30.450.40">
    <property type="match status" value="1"/>
</dbReference>
<dbReference type="Gene3D" id="3.30.565.10">
    <property type="entry name" value="Histidine kinase-like ATPase, C-terminal domain"/>
    <property type="match status" value="1"/>
</dbReference>
<dbReference type="InterPro" id="IPR003018">
    <property type="entry name" value="GAF"/>
</dbReference>
<dbReference type="InterPro" id="IPR029016">
    <property type="entry name" value="GAF-like_dom_sf"/>
</dbReference>
<dbReference type="InterPro" id="IPR036890">
    <property type="entry name" value="HATPase_C_sf"/>
</dbReference>
<dbReference type="InterPro" id="IPR005467">
    <property type="entry name" value="His_kinase_dom"/>
</dbReference>
<dbReference type="InterPro" id="IPR003661">
    <property type="entry name" value="HisK_dim/P_dom"/>
</dbReference>
<dbReference type="InterPro" id="IPR036097">
    <property type="entry name" value="HisK_dim/P_sf"/>
</dbReference>
<dbReference type="InterPro" id="IPR004358">
    <property type="entry name" value="Sig_transdc_His_kin-like_C"/>
</dbReference>
<dbReference type="PANTHER" id="PTHR24423:SF639">
    <property type="entry name" value="ETHYLENE RESPONSE SENSOR 2-RELATED"/>
    <property type="match status" value="1"/>
</dbReference>
<dbReference type="PANTHER" id="PTHR24423">
    <property type="entry name" value="TWO-COMPONENT SENSOR HISTIDINE KINASE"/>
    <property type="match status" value="1"/>
</dbReference>
<dbReference type="Pfam" id="PF25487">
    <property type="entry name" value="ETR1_N"/>
    <property type="match status" value="1"/>
</dbReference>
<dbReference type="Pfam" id="PF01590">
    <property type="entry name" value="GAF"/>
    <property type="match status" value="1"/>
</dbReference>
<dbReference type="Pfam" id="PF02518">
    <property type="entry name" value="HATPase_c"/>
    <property type="match status" value="1"/>
</dbReference>
<dbReference type="Pfam" id="PF00512">
    <property type="entry name" value="HisKA"/>
    <property type="match status" value="1"/>
</dbReference>
<dbReference type="PRINTS" id="PR00344">
    <property type="entry name" value="BCTRLSENSOR"/>
</dbReference>
<dbReference type="SMART" id="SM00065">
    <property type="entry name" value="GAF"/>
    <property type="match status" value="1"/>
</dbReference>
<dbReference type="SMART" id="SM00387">
    <property type="entry name" value="HATPase_c"/>
    <property type="match status" value="1"/>
</dbReference>
<dbReference type="SMART" id="SM00388">
    <property type="entry name" value="HisKA"/>
    <property type="match status" value="1"/>
</dbReference>
<dbReference type="SUPFAM" id="SSF55874">
    <property type="entry name" value="ATPase domain of HSP90 chaperone/DNA topoisomerase II/histidine kinase"/>
    <property type="match status" value="1"/>
</dbReference>
<dbReference type="SUPFAM" id="SSF55781">
    <property type="entry name" value="GAF domain-like"/>
    <property type="match status" value="1"/>
</dbReference>
<dbReference type="SUPFAM" id="SSF47384">
    <property type="entry name" value="Homodimeric domain of signal transducing histidine kinase"/>
    <property type="match status" value="1"/>
</dbReference>
<dbReference type="PROSITE" id="PS50109">
    <property type="entry name" value="HIS_KIN"/>
    <property type="match status" value="1"/>
</dbReference>
<feature type="chain" id="PRO_0000433864" description="Probable ethylene response sensor 2">
    <location>
        <begin position="1"/>
        <end position="635"/>
    </location>
</feature>
<feature type="transmembrane region" description="Helical" evidence="3">
    <location>
        <begin position="24"/>
        <end position="44"/>
    </location>
</feature>
<feature type="transmembrane region" description="Helical" evidence="3">
    <location>
        <begin position="59"/>
        <end position="79"/>
    </location>
</feature>
<feature type="transmembrane region" description="Helical" evidence="3">
    <location>
        <begin position="94"/>
        <end position="114"/>
    </location>
</feature>
<feature type="domain" description="GAF" evidence="7">
    <location>
        <begin position="159"/>
        <end position="308"/>
    </location>
</feature>
<feature type="domain" description="Histidine kinase" evidence="4">
    <location>
        <begin position="351"/>
        <end position="589"/>
    </location>
</feature>
<feature type="binding site" evidence="1">
    <location>
        <position position="66"/>
    </location>
    <ligand>
        <name>Cu cation</name>
        <dbReference type="ChEBI" id="CHEBI:23378"/>
    </ligand>
</feature>
<feature type="binding site" evidence="1">
    <location>
        <position position="70"/>
    </location>
    <ligand>
        <name>Cu cation</name>
        <dbReference type="ChEBI" id="CHEBI:23378"/>
    </ligand>
</feature>
<feature type="modified residue" description="Phosphohistidine; by autocatalysis" evidence="4">
    <location>
        <position position="354"/>
    </location>
</feature>
<feature type="disulfide bond" description="Interchain" evidence="1">
    <location>
        <position position="5"/>
    </location>
</feature>
<feature type="disulfide bond" description="Interchain" evidence="1">
    <location>
        <position position="7"/>
    </location>
</feature>
<feature type="sequence conflict" description="In Ref. 1; AAL66363." evidence="7" ref="1">
    <original>R</original>
    <variation>C</variation>
    <location>
        <position position="345"/>
    </location>
</feature>
<feature type="sequence conflict" description="In Ref. 1; AAL66363." evidence="7" ref="1">
    <original>V</original>
    <variation>M</variation>
    <location>
        <position position="443"/>
    </location>
</feature>
<feature type="sequence conflict" description="In Ref. 1; AAL66363." evidence="7" ref="1">
    <original>D</original>
    <variation>H</variation>
    <location>
        <position position="491"/>
    </location>
</feature>
<feature type="sequence conflict" description="In Ref. 1; AAL66363." evidence="7" ref="1">
    <original>F</original>
    <variation>L</variation>
    <location>
        <position position="510"/>
    </location>
</feature>
<name>ERS2_ORYSI</name>
<evidence type="ECO:0000250" key="1">
    <source>
        <dbReference type="UniProtKB" id="P49333"/>
    </source>
</evidence>
<evidence type="ECO:0000250" key="2">
    <source>
        <dbReference type="UniProtKB" id="Q0DKM0"/>
    </source>
</evidence>
<evidence type="ECO:0000255" key="3"/>
<evidence type="ECO:0000255" key="4">
    <source>
        <dbReference type="PROSITE-ProRule" id="PRU00107"/>
    </source>
</evidence>
<evidence type="ECO:0000269" key="5">
    <source>
    </source>
</evidence>
<evidence type="ECO:0000303" key="6">
    <source>
    </source>
</evidence>
<evidence type="ECO:0000305" key="7"/>
<evidence type="ECO:0000312" key="8">
    <source>
        <dbReference type="EMBL" id="AAL66363.1"/>
    </source>
</evidence>
<evidence type="ECO:0000312" key="9">
    <source>
        <dbReference type="EMBL" id="EEC78552.1"/>
    </source>
</evidence>
<sequence length="635" mass="70458">MDGSCDCIEPLWQADDLLVKYQYISDFFIALAYFSIPLELIYFVKKSAFFPYRWVLIQFGAFIVLCGATHLINLWTFAIYTKTIAVVLTVAKAATAVVSCITALMLVHIIPDLLNVKLRERFLKDKADELDREMGIIRTQEETGRHVHMLTHEIRSTLDRHTILRTTLVELGRTLALAECALWMPTRSGSALQLSHTIYNSAAIGSVVPINLPIVSKVFNSNRVVKIPHTSPLASITADKSRYVPPEVVAIRVPLLHLTNFQINDWPELSAKSFAVMVLMLPPDSAREWRPHERELVEVVADQVAVALSHAAILEESMRARDLLMEQNIALDAARREAEMAICARNDFLAVMNHEMRTPMRAIVSLSSLLLETNLSAEQRLMVETILKSSDLLATLTNDVLDVSKLENGSLELEIAPFNLHSTFTDVVNLIKPVAACKRLSVVVTLAPELPLHAIGDQKRLMQIILNVAGNSIKFTKEGHVSITASMARPDALRGPHEPDYHPVVSDGFFYLAVQVKDTGCGISPQDMPHTFRKFAHPENAGKWNSGSGLGLALSRRFVSLMEGNIWLESEGVGKGCTAMFFVKLGMPEKPNANLRRMAPHPLQPNQGAGGPDALSISIMDSNPRVPRVRYQSSV</sequence>
<comment type="function">
    <text evidence="2">Ethylene receptor related to bacterial two-component regulators. Acts as a negative regulator of ethylene signaling. May play a role in the regulation of flowering by up-regulating GI (GIGANTEA) and RCN1 and regulate starch accumulation by down-regulating the alpha-amylase AMY3D.</text>
</comment>
<comment type="catalytic activity">
    <reaction evidence="7">
        <text>ATP + protein L-histidine = ADP + protein N-phospho-L-histidine.</text>
        <dbReference type="EC" id="2.7.13.3"/>
    </reaction>
</comment>
<comment type="cofactor">
    <cofactor evidence="1">
        <name>Cu cation</name>
        <dbReference type="ChEBI" id="CHEBI:23378"/>
    </cofactor>
    <text evidence="1">Binds 1 copper ion per dimer.</text>
</comment>
<comment type="subunit">
    <text evidence="1">Homodimer.</text>
</comment>
<comment type="subcellular location">
    <subcellularLocation>
        <location evidence="1">Endoplasmic reticulum membrane</location>
        <topology evidence="3">Multi-pass membrane protein</topology>
    </subcellularLocation>
</comment>
<comment type="tissue specificity">
    <text evidence="5">Expressed in anthers and hulls.</text>
</comment>
<comment type="similarity">
    <text evidence="7">Belongs to the ethylene receptor family.</text>
</comment>
<proteinExistence type="evidence at transcript level"/>
<organism>
    <name type="scientific">Oryza sativa subsp. indica</name>
    <name type="common">Rice</name>
    <dbReference type="NCBI Taxonomy" id="39946"/>
    <lineage>
        <taxon>Eukaryota</taxon>
        <taxon>Viridiplantae</taxon>
        <taxon>Streptophyta</taxon>
        <taxon>Embryophyta</taxon>
        <taxon>Tracheophyta</taxon>
        <taxon>Spermatophyta</taxon>
        <taxon>Magnoliopsida</taxon>
        <taxon>Liliopsida</taxon>
        <taxon>Poales</taxon>
        <taxon>Poaceae</taxon>
        <taxon>BOP clade</taxon>
        <taxon>Oryzoideae</taxon>
        <taxon>Oryzeae</taxon>
        <taxon>Oryzinae</taxon>
        <taxon>Oryza</taxon>
        <taxon>Oryza sativa</taxon>
    </lineage>
</organism>
<gene>
    <name evidence="8" type="primary">ERS2</name>
    <name evidence="9" type="ORF">OsI_18521</name>
</gene>